<evidence type="ECO:0000255" key="1">
    <source>
        <dbReference type="PROSITE-ProRule" id="PRU00593"/>
    </source>
</evidence>
<gene>
    <name type="primary">perA</name>
    <name type="ordered locus">E2348_P1_020</name>
</gene>
<proteinExistence type="predicted"/>
<reference key="1">
    <citation type="journal article" date="1995" name="Infect. Immun.">
        <title>A plasmid-encoded regulatory region activates chromosomal eaeA expression in enteropathogenic Escherichia coli.</title>
        <authorList>
            <person name="Gomez-Duarte O.G."/>
            <person name="Kaper J.B."/>
        </authorList>
    </citation>
    <scope>NUCLEOTIDE SEQUENCE [GENOMIC DNA]</scope>
</reference>
<reference key="2">
    <citation type="submission" date="1996-07" db="EMBL/GenBank/DDBJ databases">
        <authorList>
            <person name="Kaper J.B."/>
        </authorList>
    </citation>
    <scope>SEQUENCE REVISION TO N-TERMINUS</scope>
</reference>
<reference key="3">
    <citation type="journal article" date="2009" name="J. Bacteriol.">
        <title>Complete genome sequence and comparative genome analysis of enteropathogenic Escherichia coli O127:H6 strain E2348/69.</title>
        <authorList>
            <person name="Iguchi A."/>
            <person name="Thomson N.R."/>
            <person name="Ogura Y."/>
            <person name="Saunders D."/>
            <person name="Ooka T."/>
            <person name="Henderson I.R."/>
            <person name="Harris D."/>
            <person name="Asadulghani M."/>
            <person name="Kurokawa K."/>
            <person name="Dean P."/>
            <person name="Kenny B."/>
            <person name="Quail M.A."/>
            <person name="Thurston S."/>
            <person name="Dougan G."/>
            <person name="Hayashi T."/>
            <person name="Parkhill J."/>
            <person name="Frankel G."/>
        </authorList>
    </citation>
    <scope>NUCLEOTIDE SEQUENCE [LARGE SCALE GENOMIC DNA]</scope>
    <source>
        <strain>E2348/69 / EPEC</strain>
    </source>
</reference>
<organism>
    <name type="scientific">Escherichia coli O127:H6 (strain E2348/69 / EPEC)</name>
    <dbReference type="NCBI Taxonomy" id="574521"/>
    <lineage>
        <taxon>Bacteria</taxon>
        <taxon>Pseudomonadati</taxon>
        <taxon>Pseudomonadota</taxon>
        <taxon>Gammaproteobacteria</taxon>
        <taxon>Enterobacterales</taxon>
        <taxon>Enterobacteriaceae</taxon>
        <taxon>Escherichia</taxon>
    </lineage>
</organism>
<feature type="chain" id="PRO_0000194545" description="Transcriptional activator PerA">
    <location>
        <begin position="1"/>
        <end position="274"/>
    </location>
</feature>
<feature type="domain" description="HTH araC/xylS-type" evidence="1">
    <location>
        <begin position="168"/>
        <end position="265"/>
    </location>
</feature>
<feature type="DNA-binding region" description="H-T-H motif" evidence="1">
    <location>
        <begin position="185"/>
        <end position="206"/>
    </location>
</feature>
<feature type="DNA-binding region" description="H-T-H motif" evidence="1">
    <location>
        <begin position="232"/>
        <end position="255"/>
    </location>
</feature>
<accession>P43459</accession>
<accession>B7UTE7</accession>
<comment type="function">
    <text>Could help in the transcriptional activator of eaeA expression in enteropathogenic E.coli. However, it seems that it is PerC which acts as an activator.</text>
</comment>
<sequence>MLTSKKEMQSSENKQEENLALLLTNYISYQNIVIFTGGNQFKIRNKKEFTEYTIESNSLFFLAKNTHWDMEIVGIDNSNPYRKIIIDDALIKLLHSISSDDSCYVKKKIFTANLNEMQLNIVSNIITDIKYSGNNKKIFKILYLLSFFNDYNDIVNVILSASSKSIVDRVIKVIELDISKNWKLGDVSSSMFMSDSCLRKQLNKENLTFKKIMLDIKMKHASLFLRTTDKNIDEISCLVGFNSTSYFIKVFKEYYNTTPKKYNGVYSITQGTLP</sequence>
<dbReference type="EMBL" id="Z48561">
    <property type="protein sequence ID" value="CAA88445.1"/>
    <property type="molecule type" value="Genomic_DNA"/>
</dbReference>
<dbReference type="EMBL" id="FM180569">
    <property type="protein sequence ID" value="CAS07456.1"/>
    <property type="molecule type" value="Genomic_DNA"/>
</dbReference>
<dbReference type="RefSeq" id="WP_000958124.1">
    <property type="nucleotide sequence ID" value="NC_011603.1"/>
</dbReference>
<dbReference type="RefSeq" id="YP_001965397.1">
    <property type="nucleotide sequence ID" value="NC_010862.1"/>
</dbReference>
<dbReference type="SMR" id="P43459"/>
<dbReference type="KEGG" id="ecg:E2348_P1_020"/>
<dbReference type="HOGENOM" id="CLU_000445_81_4_6"/>
<dbReference type="PHI-base" id="PHI:3803"/>
<dbReference type="Proteomes" id="UP000008205">
    <property type="component" value="Plasmid pMAR2"/>
</dbReference>
<dbReference type="GO" id="GO:0003700">
    <property type="term" value="F:DNA-binding transcription factor activity"/>
    <property type="evidence" value="ECO:0007669"/>
    <property type="project" value="InterPro"/>
</dbReference>
<dbReference type="GO" id="GO:0043565">
    <property type="term" value="F:sequence-specific DNA binding"/>
    <property type="evidence" value="ECO:0007669"/>
    <property type="project" value="InterPro"/>
</dbReference>
<dbReference type="Gene3D" id="1.10.10.60">
    <property type="entry name" value="Homeodomain-like"/>
    <property type="match status" value="1"/>
</dbReference>
<dbReference type="InterPro" id="IPR009057">
    <property type="entry name" value="Homeodomain-like_sf"/>
</dbReference>
<dbReference type="InterPro" id="IPR018060">
    <property type="entry name" value="HTH_AraC"/>
</dbReference>
<dbReference type="InterPro" id="IPR018062">
    <property type="entry name" value="HTH_AraC-typ_CS"/>
</dbReference>
<dbReference type="InterPro" id="IPR020449">
    <property type="entry name" value="Tscrpt_reg_AraC-type_HTH"/>
</dbReference>
<dbReference type="PANTHER" id="PTHR43280">
    <property type="entry name" value="ARAC-FAMILY TRANSCRIPTIONAL REGULATOR"/>
    <property type="match status" value="1"/>
</dbReference>
<dbReference type="PANTHER" id="PTHR43280:SF33">
    <property type="entry name" value="HTH-TYPE TRANSCRIPTIONAL REGULATOR APPY-RELATED"/>
    <property type="match status" value="1"/>
</dbReference>
<dbReference type="Pfam" id="PF12833">
    <property type="entry name" value="HTH_18"/>
    <property type="match status" value="1"/>
</dbReference>
<dbReference type="PRINTS" id="PR00032">
    <property type="entry name" value="HTHARAC"/>
</dbReference>
<dbReference type="SMART" id="SM00342">
    <property type="entry name" value="HTH_ARAC"/>
    <property type="match status" value="1"/>
</dbReference>
<dbReference type="SUPFAM" id="SSF46689">
    <property type="entry name" value="Homeodomain-like"/>
    <property type="match status" value="1"/>
</dbReference>
<dbReference type="PROSITE" id="PS00041">
    <property type="entry name" value="HTH_ARAC_FAMILY_1"/>
    <property type="match status" value="1"/>
</dbReference>
<dbReference type="PROSITE" id="PS01124">
    <property type="entry name" value="HTH_ARAC_FAMILY_2"/>
    <property type="match status" value="1"/>
</dbReference>
<geneLocation type="plasmid">
    <name>pMAR2</name>
</geneLocation>
<keyword id="KW-0010">Activator</keyword>
<keyword id="KW-0238">DNA-binding</keyword>
<keyword id="KW-0614">Plasmid</keyword>
<keyword id="KW-1185">Reference proteome</keyword>
<keyword id="KW-0804">Transcription</keyword>
<keyword id="KW-0805">Transcription regulation</keyword>
<name>PERA_ECO27</name>
<protein>
    <recommendedName>
        <fullName>Transcriptional activator PerA</fullName>
    </recommendedName>
</protein>